<protein>
    <recommendedName>
        <fullName evidence="1">Cytochrome b6</fullName>
    </recommendedName>
</protein>
<sequence>MGKIYDWFEERLEIQAIADDIISKYVPPHVNIFYCLGGITLTCFLIQVATGFAMTFYYRPTVAEAFASVQYIMTDVNFGWLIRSVHRWSASMMVLMMILHVFRVYLTGGFKKPRELTWVTGVILAVLTVSFGVTGYSLPWDQIGYWAVKIVTGVPDAIPIIGAPIVELLRGSVSVGQTTLTRFYSLHTFVLPLLTAVFMLMHFLMIRKQGISGPL</sequence>
<reference key="1">
    <citation type="submission" date="2002-02" db="EMBL/GenBank/DDBJ databases">
        <title>psbB gene cluster in Charophyceae.</title>
        <authorList>
            <person name="Lee J."/>
            <person name="Manhart J.R."/>
        </authorList>
    </citation>
    <scope>NUCLEOTIDE SEQUENCE [GENOMIC DNA]</scope>
</reference>
<comment type="function">
    <text evidence="1">Component of the cytochrome b6-f complex, which mediates electron transfer between photosystem II (PSII) and photosystem I (PSI), cyclic electron flow around PSI, and state transitions.</text>
</comment>
<comment type="cofactor">
    <cofactor evidence="1">
        <name>heme b</name>
        <dbReference type="ChEBI" id="CHEBI:60344"/>
    </cofactor>
    <text evidence="1">Binds 2 heme b groups non-covalently with two histidine residues as axial ligands.</text>
</comment>
<comment type="cofactor">
    <cofactor evidence="1">
        <name>heme c</name>
        <dbReference type="ChEBI" id="CHEBI:61717"/>
    </cofactor>
    <text evidence="1">Binds one heme group covalently by a single cysteine link with no axial amino acid ligand. This heme was named heme ci.</text>
</comment>
<comment type="subunit">
    <text evidence="1">The 4 large subunits of the cytochrome b6-f complex are cytochrome b6, subunit IV (17 kDa polypeptide, PetD), cytochrome f and the Rieske protein, while the 4 small subunits are PetG, PetL, PetM and PetN. The complex functions as a dimer.</text>
</comment>
<comment type="subcellular location">
    <subcellularLocation>
        <location evidence="1">Plastid</location>
        <location evidence="1">Chloroplast thylakoid membrane</location>
        <topology evidence="1">Multi-pass membrane protein</topology>
    </subcellularLocation>
</comment>
<comment type="miscellaneous">
    <text evidence="1">Heme 1 (or BH or b566) is high-potential and absorbs at about 566 nm, and heme 2 (or BL or b562) is low-potential and absorbs at about 562 nm.</text>
</comment>
<comment type="similarity">
    <text evidence="1">Belongs to the cytochrome b family. PetB subfamily.</text>
</comment>
<gene>
    <name evidence="1" type="primary">petB</name>
</gene>
<name>CYB6_SPIMX</name>
<organism>
    <name type="scientific">Spirogyra maxima</name>
    <name type="common">Green alga</name>
    <dbReference type="NCBI Taxonomy" id="3180"/>
    <lineage>
        <taxon>Eukaryota</taxon>
        <taxon>Viridiplantae</taxon>
        <taxon>Streptophyta</taxon>
        <taxon>Zygnematophyceae</taxon>
        <taxon>Zygnematophycidae</taxon>
        <taxon>Zygnematales</taxon>
        <taxon>Zygnemataceae</taxon>
        <taxon>Spirogyra</taxon>
    </lineage>
</organism>
<dbReference type="EMBL" id="AF482498">
    <property type="protein sequence ID" value="AAQ05913.1"/>
    <property type="molecule type" value="Genomic_DNA"/>
</dbReference>
<dbReference type="SMR" id="Q71KP4"/>
<dbReference type="GO" id="GO:0009535">
    <property type="term" value="C:chloroplast thylakoid membrane"/>
    <property type="evidence" value="ECO:0007669"/>
    <property type="project" value="UniProtKB-SubCell"/>
</dbReference>
<dbReference type="GO" id="GO:0045158">
    <property type="term" value="F:electron transporter, transferring electrons within cytochrome b6/f complex of photosystem II activity"/>
    <property type="evidence" value="ECO:0007669"/>
    <property type="project" value="UniProtKB-UniRule"/>
</dbReference>
<dbReference type="GO" id="GO:0046872">
    <property type="term" value="F:metal ion binding"/>
    <property type="evidence" value="ECO:0007669"/>
    <property type="project" value="UniProtKB-KW"/>
</dbReference>
<dbReference type="GO" id="GO:0016491">
    <property type="term" value="F:oxidoreductase activity"/>
    <property type="evidence" value="ECO:0007669"/>
    <property type="project" value="InterPro"/>
</dbReference>
<dbReference type="GO" id="GO:0015979">
    <property type="term" value="P:photosynthesis"/>
    <property type="evidence" value="ECO:0007669"/>
    <property type="project" value="UniProtKB-UniRule"/>
</dbReference>
<dbReference type="GO" id="GO:0022904">
    <property type="term" value="P:respiratory electron transport chain"/>
    <property type="evidence" value="ECO:0007669"/>
    <property type="project" value="InterPro"/>
</dbReference>
<dbReference type="CDD" id="cd00284">
    <property type="entry name" value="Cytochrome_b_N"/>
    <property type="match status" value="1"/>
</dbReference>
<dbReference type="FunFam" id="1.20.810.10:FF:000001">
    <property type="entry name" value="Cytochrome b6"/>
    <property type="match status" value="1"/>
</dbReference>
<dbReference type="Gene3D" id="1.20.810.10">
    <property type="entry name" value="Cytochrome Bc1 Complex, Chain C"/>
    <property type="match status" value="1"/>
</dbReference>
<dbReference type="HAMAP" id="MF_00633">
    <property type="entry name" value="Cytb6_f_cytb6"/>
    <property type="match status" value="1"/>
</dbReference>
<dbReference type="InterPro" id="IPR005797">
    <property type="entry name" value="Cyt_b/b6_N"/>
</dbReference>
<dbReference type="InterPro" id="IPR023530">
    <property type="entry name" value="Cyt_B6_PetB"/>
</dbReference>
<dbReference type="InterPro" id="IPR027387">
    <property type="entry name" value="Cytb/b6-like_sf"/>
</dbReference>
<dbReference type="InterPro" id="IPR048259">
    <property type="entry name" value="Cytochrome_b_N_euk/bac"/>
</dbReference>
<dbReference type="InterPro" id="IPR016174">
    <property type="entry name" value="Di-haem_cyt_TM"/>
</dbReference>
<dbReference type="NCBIfam" id="NF002990">
    <property type="entry name" value="PRK03735.1"/>
    <property type="match status" value="1"/>
</dbReference>
<dbReference type="PANTHER" id="PTHR19271">
    <property type="entry name" value="CYTOCHROME B"/>
    <property type="match status" value="1"/>
</dbReference>
<dbReference type="PANTHER" id="PTHR19271:SF16">
    <property type="entry name" value="CYTOCHROME B"/>
    <property type="match status" value="1"/>
</dbReference>
<dbReference type="Pfam" id="PF00033">
    <property type="entry name" value="Cytochrome_B"/>
    <property type="match status" value="1"/>
</dbReference>
<dbReference type="PIRSF" id="PIRSF000032">
    <property type="entry name" value="Cytochrome_b6"/>
    <property type="match status" value="1"/>
</dbReference>
<dbReference type="SUPFAM" id="SSF81342">
    <property type="entry name" value="Transmembrane di-heme cytochromes"/>
    <property type="match status" value="1"/>
</dbReference>
<dbReference type="PROSITE" id="PS51002">
    <property type="entry name" value="CYTB_NTER"/>
    <property type="match status" value="1"/>
</dbReference>
<accession>Q71KP4</accession>
<keyword id="KW-0150">Chloroplast</keyword>
<keyword id="KW-0249">Electron transport</keyword>
<keyword id="KW-0349">Heme</keyword>
<keyword id="KW-0408">Iron</keyword>
<keyword id="KW-0472">Membrane</keyword>
<keyword id="KW-0479">Metal-binding</keyword>
<keyword id="KW-0602">Photosynthesis</keyword>
<keyword id="KW-0934">Plastid</keyword>
<keyword id="KW-0793">Thylakoid</keyword>
<keyword id="KW-0812">Transmembrane</keyword>
<keyword id="KW-1133">Transmembrane helix</keyword>
<keyword id="KW-0813">Transport</keyword>
<geneLocation type="chloroplast"/>
<feature type="chain" id="PRO_0000061820" description="Cytochrome b6">
    <location>
        <begin position="1"/>
        <end position="215"/>
    </location>
</feature>
<feature type="transmembrane region" description="Helical" evidence="1">
    <location>
        <begin position="32"/>
        <end position="52"/>
    </location>
</feature>
<feature type="transmembrane region" description="Helical" evidence="1">
    <location>
        <begin position="90"/>
        <end position="110"/>
    </location>
</feature>
<feature type="transmembrane region" description="Helical" evidence="1">
    <location>
        <begin position="116"/>
        <end position="136"/>
    </location>
</feature>
<feature type="transmembrane region" description="Helical" evidence="1">
    <location>
        <begin position="186"/>
        <end position="206"/>
    </location>
</feature>
<feature type="binding site" description="covalent" evidence="1">
    <location>
        <position position="35"/>
    </location>
    <ligand>
        <name>heme c</name>
        <dbReference type="ChEBI" id="CHEBI:61717"/>
    </ligand>
</feature>
<feature type="binding site" description="axial binding residue" evidence="1">
    <location>
        <position position="86"/>
    </location>
    <ligand>
        <name>heme b</name>
        <dbReference type="ChEBI" id="CHEBI:60344"/>
        <label>2</label>
    </ligand>
    <ligandPart>
        <name>Fe</name>
        <dbReference type="ChEBI" id="CHEBI:18248"/>
    </ligandPart>
</feature>
<feature type="binding site" description="axial binding residue" evidence="1">
    <location>
        <position position="100"/>
    </location>
    <ligand>
        <name>heme b</name>
        <dbReference type="ChEBI" id="CHEBI:60344"/>
        <label>1</label>
    </ligand>
    <ligandPart>
        <name>Fe</name>
        <dbReference type="ChEBI" id="CHEBI:18248"/>
    </ligandPart>
</feature>
<feature type="binding site" description="axial binding residue" evidence="1">
    <location>
        <position position="187"/>
    </location>
    <ligand>
        <name>heme b</name>
        <dbReference type="ChEBI" id="CHEBI:60344"/>
        <label>2</label>
    </ligand>
    <ligandPart>
        <name>Fe</name>
        <dbReference type="ChEBI" id="CHEBI:18248"/>
    </ligandPart>
</feature>
<feature type="binding site" description="axial binding residue" evidence="1">
    <location>
        <position position="202"/>
    </location>
    <ligand>
        <name>heme b</name>
        <dbReference type="ChEBI" id="CHEBI:60344"/>
        <label>1</label>
    </ligand>
    <ligandPart>
        <name>Fe</name>
        <dbReference type="ChEBI" id="CHEBI:18248"/>
    </ligandPart>
</feature>
<evidence type="ECO:0000255" key="1">
    <source>
        <dbReference type="HAMAP-Rule" id="MF_00633"/>
    </source>
</evidence>
<proteinExistence type="inferred from homology"/>